<accession>P33144</accession>
<accession>C8V9Q5</accession>
<accession>Q5ASE7</accession>
<keyword id="KW-0131">Cell cycle</keyword>
<keyword id="KW-0132">Cell division</keyword>
<keyword id="KW-0159">Chromosome partition</keyword>
<keyword id="KW-0378">Hydrolase</keyword>
<keyword id="KW-0498">Mitosis</keyword>
<keyword id="KW-0539">Nucleus</keyword>
<keyword id="KW-0645">Protease</keyword>
<keyword id="KW-1185">Reference proteome</keyword>
<keyword id="KW-0788">Thiol protease</keyword>
<name>BIMB_EMENI</name>
<evidence type="ECO:0000250" key="1"/>
<evidence type="ECO:0000256" key="2">
    <source>
        <dbReference type="SAM" id="MobiDB-lite"/>
    </source>
</evidence>
<evidence type="ECO:0000305" key="3"/>
<organism>
    <name type="scientific">Emericella nidulans (strain FGSC A4 / ATCC 38163 / CBS 112.46 / NRRL 194 / M139)</name>
    <name type="common">Aspergillus nidulans</name>
    <dbReference type="NCBI Taxonomy" id="227321"/>
    <lineage>
        <taxon>Eukaryota</taxon>
        <taxon>Fungi</taxon>
        <taxon>Dikarya</taxon>
        <taxon>Ascomycota</taxon>
        <taxon>Pezizomycotina</taxon>
        <taxon>Eurotiomycetes</taxon>
        <taxon>Eurotiomycetidae</taxon>
        <taxon>Eurotiales</taxon>
        <taxon>Aspergillaceae</taxon>
        <taxon>Aspergillus</taxon>
        <taxon>Aspergillus subgen. Nidulantes</taxon>
    </lineage>
</organism>
<reference key="1">
    <citation type="journal article" date="1992" name="J. Biol. Chem.">
        <title>The bimB3 mutation of Aspergillus nidulans uncouples DNA replication from the completion of mitosis.</title>
        <authorList>
            <person name="May G.S."/>
            <person name="McGoldrick C.A."/>
            <person name="Holt C.L."/>
            <person name="Denison S.H."/>
        </authorList>
    </citation>
    <scope>NUCLEOTIDE SEQUENCE [GENOMIC DNA]</scope>
    <source>
        <strain>A773</strain>
    </source>
</reference>
<reference key="2">
    <citation type="journal article" date="2005" name="Nature">
        <title>Sequencing of Aspergillus nidulans and comparative analysis with A. fumigatus and A. oryzae.</title>
        <authorList>
            <person name="Galagan J.E."/>
            <person name="Calvo S.E."/>
            <person name="Cuomo C."/>
            <person name="Ma L.-J."/>
            <person name="Wortman J.R."/>
            <person name="Batzoglou S."/>
            <person name="Lee S.-I."/>
            <person name="Bastuerkmen M."/>
            <person name="Spevak C.C."/>
            <person name="Clutterbuck J."/>
            <person name="Kapitonov V."/>
            <person name="Jurka J."/>
            <person name="Scazzocchio C."/>
            <person name="Farman M.L."/>
            <person name="Butler J."/>
            <person name="Purcell S."/>
            <person name="Harris S."/>
            <person name="Braus G.H."/>
            <person name="Draht O."/>
            <person name="Busch S."/>
            <person name="D'Enfert C."/>
            <person name="Bouchier C."/>
            <person name="Goldman G.H."/>
            <person name="Bell-Pedersen D."/>
            <person name="Griffiths-Jones S."/>
            <person name="Doonan J.H."/>
            <person name="Yu J."/>
            <person name="Vienken K."/>
            <person name="Pain A."/>
            <person name="Freitag M."/>
            <person name="Selker E.U."/>
            <person name="Archer D.B."/>
            <person name="Penalva M.A."/>
            <person name="Oakley B.R."/>
            <person name="Momany M."/>
            <person name="Tanaka T."/>
            <person name="Kumagai T."/>
            <person name="Asai K."/>
            <person name="Machida M."/>
            <person name="Nierman W.C."/>
            <person name="Denning D.W."/>
            <person name="Caddick M.X."/>
            <person name="Hynes M."/>
            <person name="Paoletti M."/>
            <person name="Fischer R."/>
            <person name="Miller B.L."/>
            <person name="Dyer P.S."/>
            <person name="Sachs M.S."/>
            <person name="Osmani S.A."/>
            <person name="Birren B.W."/>
        </authorList>
    </citation>
    <scope>NUCLEOTIDE SEQUENCE [LARGE SCALE GENOMIC DNA]</scope>
    <source>
        <strain>FGSC A4 / ATCC 38163 / CBS 112.46 / NRRL 194 / M139</strain>
    </source>
</reference>
<reference key="3">
    <citation type="journal article" date="2009" name="Fungal Genet. Biol.">
        <title>The 2008 update of the Aspergillus nidulans genome annotation: a community effort.</title>
        <authorList>
            <person name="Wortman J.R."/>
            <person name="Gilsenan J.M."/>
            <person name="Joardar V."/>
            <person name="Deegan J."/>
            <person name="Clutterbuck J."/>
            <person name="Andersen M.R."/>
            <person name="Archer D."/>
            <person name="Bencina M."/>
            <person name="Braus G."/>
            <person name="Coutinho P."/>
            <person name="von Dohren H."/>
            <person name="Doonan J."/>
            <person name="Driessen A.J."/>
            <person name="Durek P."/>
            <person name="Espeso E."/>
            <person name="Fekete E."/>
            <person name="Flipphi M."/>
            <person name="Estrada C.G."/>
            <person name="Geysens S."/>
            <person name="Goldman G."/>
            <person name="de Groot P.W."/>
            <person name="Hansen K."/>
            <person name="Harris S.D."/>
            <person name="Heinekamp T."/>
            <person name="Helmstaedt K."/>
            <person name="Henrissat B."/>
            <person name="Hofmann G."/>
            <person name="Homan T."/>
            <person name="Horio T."/>
            <person name="Horiuchi H."/>
            <person name="James S."/>
            <person name="Jones M."/>
            <person name="Karaffa L."/>
            <person name="Karanyi Z."/>
            <person name="Kato M."/>
            <person name="Keller N."/>
            <person name="Kelly D.E."/>
            <person name="Kiel J.A."/>
            <person name="Kim J.M."/>
            <person name="van der Klei I.J."/>
            <person name="Klis F.M."/>
            <person name="Kovalchuk A."/>
            <person name="Krasevec N."/>
            <person name="Kubicek C.P."/>
            <person name="Liu B."/>
            <person name="Maccabe A."/>
            <person name="Meyer V."/>
            <person name="Mirabito P."/>
            <person name="Miskei M."/>
            <person name="Mos M."/>
            <person name="Mullins J."/>
            <person name="Nelson D.R."/>
            <person name="Nielsen J."/>
            <person name="Oakley B.R."/>
            <person name="Osmani S.A."/>
            <person name="Pakula T."/>
            <person name="Paszewski A."/>
            <person name="Paulsen I."/>
            <person name="Pilsyk S."/>
            <person name="Pocsi I."/>
            <person name="Punt P.J."/>
            <person name="Ram A.F."/>
            <person name="Ren Q."/>
            <person name="Robellet X."/>
            <person name="Robson G."/>
            <person name="Seiboth B."/>
            <person name="van Solingen P."/>
            <person name="Specht T."/>
            <person name="Sun J."/>
            <person name="Taheri-Talesh N."/>
            <person name="Takeshita N."/>
            <person name="Ussery D."/>
            <person name="vanKuyk P.A."/>
            <person name="Visser H."/>
            <person name="van de Vondervoort P.J."/>
            <person name="de Vries R.P."/>
            <person name="Walton J."/>
            <person name="Xiang X."/>
            <person name="Xiong Y."/>
            <person name="Zeng A.P."/>
            <person name="Brandt B.W."/>
            <person name="Cornell M.J."/>
            <person name="van den Hondel C.A."/>
            <person name="Visser J."/>
            <person name="Oliver S.G."/>
            <person name="Turner G."/>
        </authorList>
    </citation>
    <scope>GENOME REANNOTATION</scope>
    <source>
        <strain>FGSC A4 / ATCC 38163 / CBS 112.46 / NRRL 194 / M139</strain>
    </source>
</reference>
<comment type="function">
    <text>Required for nuclear division. Could function in the mitotic spindle.</text>
</comment>
<comment type="catalytic activity">
    <reaction>
        <text>All bonds known to be hydrolyzed by this endopeptidase have arginine in P1 and an acidic residue in P4. P6 is often occupied by an acidic residue or by a hydroxy-amino-acid residue, the phosphorylation of which enhances cleavage.</text>
        <dbReference type="EC" id="3.4.22.49"/>
    </reaction>
</comment>
<comment type="subcellular location">
    <subcellularLocation>
        <location>Nucleus</location>
    </subcellularLocation>
</comment>
<comment type="sequence caution" evidence="3">
    <conflict type="frameshift">
        <sequence resource="EMBL-CDS" id="AAA33297"/>
    </conflict>
</comment>
<comment type="sequence caution" evidence="3">
    <conflict type="frameshift">
        <sequence resource="EMBL-CDS" id="CBF78027"/>
    </conflict>
</comment>
<comment type="sequence caution" evidence="3">
    <conflict type="frameshift">
        <sequence resource="EMBL-CDS" id="EAA60576"/>
    </conflict>
</comment>
<gene>
    <name type="primary">bimB</name>
    <name type="ORF">AN8783</name>
</gene>
<protein>
    <recommendedName>
        <fullName>Separin</fullName>
        <ecNumber>3.4.22.49</ecNumber>
    </recommendedName>
    <alternativeName>
        <fullName>Cell division-associated protein bimB</fullName>
    </alternativeName>
    <alternativeName>
        <fullName>Separase</fullName>
    </alternativeName>
</protein>
<sequence length="2067" mass="227831">MAVTSFPADSLASMESVKQTVRSTSTCSAATVLSLQTLFRSAGEMETTLRRTARGTKATATNATASSRAKTTRTKSTSTSTTRTKTPAQDVSTFTSTSASLADTRLSNQEKLVLATEVFNSTLKTLSDAVKTVMSISKEKKDASPTKRGTTTKGRVKTSQPDLTDNENGVSAVAECARLSLSCLRMLRTDAMVDGGLPNLQLEQGACVLAGRLLALGLNDAAYKELRGLKRRIQSYLEELPSGRKRTGRKDAEDGEETAKERMSDLLSFSDIANARSIHGLLVSFQSNALRLIAAEKRPATVQKLVPSLQLTDESSPANVIMASIDSGALTKDKAAVQLQLLSSTVLSLSASGASTGKERLRPSIVLSLQLLALEIRCMSWKLSGHACEDNKEMWDPLARYIGAFAQATKSIEKAEFAVIYKNIVRLQSAFSKTQNCATRSTDNLSVARIATILGQLAQDAGCFDEALQLFTESLNPLSSSQCLGMATVRCKIAALHFQAFKSSVKLPGDVSDAVSQATAALSISLKGSSHDLDELLVQAAKLKKLAMGWFGDLISKGQGSQCENVVFPRICEFLSSFVRFLRRYIGRRPENDELNDREIFQKRIDAAQNIVLAAVDSTIAIGKLSVMSQRPAWEETVSTLLDCQRLLATIEPFDEVDVATADSIDQALVKLSNLFWSRYLKEKEAGKNARELLPLLKQSAYLLSGCSPSQRATGFAPLKYERLAHTYIEGNMVSEAEVAFRQSITDHIAAGALDKIASSTDGCFPHQMNQDPKRSGFTLGRVLSAYLKVKLRNKRSAVNEIFDDETLPSVQRGHVLEWQLGILTEIHGTSNNDNVFRSVFAEVATRLFKVYPAEQHPVRRLRVLLSGLRFALEQPGFLDSSLLQRFADEGRKGLDDDDYQDDDDIKSLAVYLKNSVRLTLGLQQGSLGPEELELIVSTWTSILRFCHDLKSLVACVGNVEYFLLQMKAVVDYTEIHGLWKFQLSTLELVLRVTELHGAGTFSEAIIVLSRLVLQYCRMGFCIKAHSLLSRADGYIANHEVSCLARLSYELARVGFLLETGDNQKAATVLSTARMIYEKHQATEDLDACSVLTKISWERLVADAAFMSSRLSFAQGSIKDALYFAKLSVRLNCRIWAKVEKLAQKKQEKAVVGDSSELEIVVEGMAKLEVSQTSSTYSQGAPFWPHIGSHHSSLLHLANLSAHHGLFQDAIYYGEQALKINKSLNANVRLIASQAHLGSHWILGGHISEGQQLLASAKALSDKLGSSIELVSLRLSLAALHRVEGDYRNEYRTLREAEKLLGGLFESQADSADIPDLEEKMDKLRVRPKSRSTRQPATTATRRTRSATTSARSTPKPPQSVEATNASNTLLQMKSEILLQQAASLRAQREFEAASTLLSDARKFAVTRNSRISVHLGESEHLLADAIRNFANHAVYCVLPESTISLPSLEPKAASESSSKSATRKTRAPTRGTRTKAQAATEDFSVMLSKAGDCLNGIFDTATQLGSTLDSHSASRLMSRISMLSHVTASPNHILWPHSPANMNEVGRIGAFARERAAIRIDKRLADYCDPLLWPRSELESEGVSPDFTKEYVDILPDNWNVLSLSLSADRAEFVVSRLHRGCSPFLLRLPLRRGNSEDEEEQFTFEDGRDEMKELIRLANESAHAAKLQVDRQMKKEWWKNREALDRRMENLLQNIENVWFGGFRGIFSPIPLCEKSLARFASAFENILENHLPSRRKGSRAQGPKLTLHPNVLELFVGVKGLDDQEDPEDTLMDLLYFVVDILQFQGERNAYDEVDFDMMVVETLDAVRAYHEAAKDQATQRPNNTVLVLDKSLHLFPWESLPCLQGLPVCRVPSLECLRDRVLHLRSGKQSALSIDRRNGTYILNPTGDLKTTQETFEKDLSSLKGWTGMVNRQPTEDEFKDSLQSKSLFLYFGHGSGAQYIRGRTVKRLDRCAVAFLMGCSSGTLTEAGEYEPYGTPMNYLQAGSPALVATLWDVTDKDIDRFAKATFEHWGLIGNGHRGNEGIGEAGVALDAAVSQSRGACVLKYLNGAAPVVYGVPGVFLH</sequence>
<dbReference type="EC" id="3.4.22.49"/>
<dbReference type="EMBL" id="M83232">
    <property type="protein sequence ID" value="AAA33297.1"/>
    <property type="status" value="ALT_FRAME"/>
    <property type="molecule type" value="Genomic_DNA"/>
</dbReference>
<dbReference type="EMBL" id="AACD01000161">
    <property type="protein sequence ID" value="EAA60576.1"/>
    <property type="status" value="ALT_FRAME"/>
    <property type="molecule type" value="Genomic_DNA"/>
</dbReference>
<dbReference type="EMBL" id="BN001303">
    <property type="protein sequence ID" value="CBF78027.1"/>
    <property type="status" value="ALT_FRAME"/>
    <property type="molecule type" value="Genomic_DNA"/>
</dbReference>
<dbReference type="PIR" id="A42854">
    <property type="entry name" value="A42854"/>
</dbReference>
<dbReference type="RefSeq" id="XP_682052.1">
    <property type="nucleotide sequence ID" value="XM_676960.1"/>
</dbReference>
<dbReference type="SMR" id="P33144"/>
<dbReference type="STRING" id="227321.P33144"/>
<dbReference type="KEGG" id="ani:ANIA_08783"/>
<dbReference type="eggNOG" id="KOG1849">
    <property type="taxonomic scope" value="Eukaryota"/>
</dbReference>
<dbReference type="HOGENOM" id="CLU_000454_0_0_1"/>
<dbReference type="InParanoid" id="P33144"/>
<dbReference type="OrthoDB" id="10255632at2759"/>
<dbReference type="Proteomes" id="UP000000560">
    <property type="component" value="Chromosome III"/>
</dbReference>
<dbReference type="GO" id="GO:0005737">
    <property type="term" value="C:cytoplasm"/>
    <property type="evidence" value="ECO:0000318"/>
    <property type="project" value="GO_Central"/>
</dbReference>
<dbReference type="GO" id="GO:0072686">
    <property type="term" value="C:mitotic spindle"/>
    <property type="evidence" value="ECO:0000318"/>
    <property type="project" value="GO_Central"/>
</dbReference>
<dbReference type="GO" id="GO:0044732">
    <property type="term" value="C:mitotic spindle pole body"/>
    <property type="evidence" value="ECO:0000318"/>
    <property type="project" value="GO_Central"/>
</dbReference>
<dbReference type="GO" id="GO:0005634">
    <property type="term" value="C:nucleus"/>
    <property type="evidence" value="ECO:0000318"/>
    <property type="project" value="GO_Central"/>
</dbReference>
<dbReference type="GO" id="GO:0004197">
    <property type="term" value="F:cysteine-type endopeptidase activity"/>
    <property type="evidence" value="ECO:0000318"/>
    <property type="project" value="GO_Central"/>
</dbReference>
<dbReference type="GO" id="GO:0051301">
    <property type="term" value="P:cell division"/>
    <property type="evidence" value="ECO:0007669"/>
    <property type="project" value="UniProtKB-KW"/>
</dbReference>
<dbReference type="GO" id="GO:0051307">
    <property type="term" value="P:meiotic chromosome separation"/>
    <property type="evidence" value="ECO:0000318"/>
    <property type="project" value="GO_Central"/>
</dbReference>
<dbReference type="GO" id="GO:0006508">
    <property type="term" value="P:proteolysis"/>
    <property type="evidence" value="ECO:0007669"/>
    <property type="project" value="UniProtKB-KW"/>
</dbReference>
<dbReference type="Gene3D" id="1.25.40.10">
    <property type="entry name" value="Tetratricopeptide repeat domain"/>
    <property type="match status" value="1"/>
</dbReference>
<dbReference type="InterPro" id="IPR005314">
    <property type="entry name" value="Peptidase_C50"/>
</dbReference>
<dbReference type="InterPro" id="IPR030397">
    <property type="entry name" value="SEPARIN_core_dom"/>
</dbReference>
<dbReference type="InterPro" id="IPR011990">
    <property type="entry name" value="TPR-like_helical_dom_sf"/>
</dbReference>
<dbReference type="PANTHER" id="PTHR12792">
    <property type="entry name" value="EXTRA SPINDLE POLES 1-RELATED"/>
    <property type="match status" value="1"/>
</dbReference>
<dbReference type="PANTHER" id="PTHR12792:SF0">
    <property type="entry name" value="SEPARIN"/>
    <property type="match status" value="1"/>
</dbReference>
<dbReference type="Pfam" id="PF03568">
    <property type="entry name" value="Peptidase_C50"/>
    <property type="match status" value="1"/>
</dbReference>
<dbReference type="PROSITE" id="PS51700">
    <property type="entry name" value="SEPARIN"/>
    <property type="match status" value="1"/>
</dbReference>
<proteinExistence type="predicted"/>
<feature type="chain" id="PRO_0000205902" description="Separin">
    <location>
        <begin position="1"/>
        <end position="2067"/>
    </location>
</feature>
<feature type="domain" description="Peptidase C50">
    <location>
        <begin position="1880"/>
        <end position="1975"/>
    </location>
</feature>
<feature type="region of interest" description="Disordered" evidence="2">
    <location>
        <begin position="51"/>
        <end position="91"/>
    </location>
</feature>
<feature type="region of interest" description="Disordered" evidence="2">
    <location>
        <begin position="140"/>
        <end position="167"/>
    </location>
</feature>
<feature type="region of interest" description="Disordered" evidence="2">
    <location>
        <begin position="1316"/>
        <end position="1363"/>
    </location>
</feature>
<feature type="region of interest" description="Disordered" evidence="2">
    <location>
        <begin position="1449"/>
        <end position="1478"/>
    </location>
</feature>
<feature type="compositionally biased region" description="Low complexity" evidence="2">
    <location>
        <begin position="55"/>
        <end position="86"/>
    </location>
</feature>
<feature type="compositionally biased region" description="Low complexity" evidence="2">
    <location>
        <begin position="1333"/>
        <end position="1354"/>
    </location>
</feature>
<feature type="compositionally biased region" description="Low complexity" evidence="2">
    <location>
        <begin position="1449"/>
        <end position="1461"/>
    </location>
</feature>
<feature type="active site" evidence="1">
    <location>
        <position position="1964"/>
    </location>
</feature>
<feature type="sequence conflict" description="In Ref. 1; AAA33297." evidence="3" ref="1">
    <original>S</original>
    <variation>P</variation>
    <location>
        <position position="512"/>
    </location>
</feature>
<feature type="sequence conflict" description="In Ref. 1; AAA33297." evidence="3" ref="1">
    <original>A</original>
    <variation>R</variation>
    <location>
        <position position="520"/>
    </location>
</feature>